<feature type="chain" id="PRO_0000244524" description="Kinesin light chain 3">
    <location>
        <begin position="1"/>
        <end position="505"/>
    </location>
</feature>
<feature type="repeat" description="TPR 1">
    <location>
        <begin position="207"/>
        <end position="240"/>
    </location>
</feature>
<feature type="repeat" description="TPR 2">
    <location>
        <begin position="249"/>
        <end position="282"/>
    </location>
</feature>
<feature type="repeat" description="TPR 3">
    <location>
        <begin position="291"/>
        <end position="324"/>
    </location>
</feature>
<feature type="repeat" description="TPR 4">
    <location>
        <begin position="333"/>
        <end position="366"/>
    </location>
</feature>
<feature type="repeat" description="TPR 5">
    <location>
        <begin position="375"/>
        <end position="408"/>
    </location>
</feature>
<feature type="region of interest" description="Disordered" evidence="5">
    <location>
        <begin position="1"/>
        <end position="20"/>
    </location>
</feature>
<feature type="region of interest" description="Disordered" evidence="5">
    <location>
        <begin position="157"/>
        <end position="193"/>
    </location>
</feature>
<feature type="region of interest" description="Disordered" evidence="5">
    <location>
        <begin position="409"/>
        <end position="505"/>
    </location>
</feature>
<feature type="coiled-coil region" evidence="4">
    <location>
        <begin position="88"/>
        <end position="150"/>
    </location>
</feature>
<feature type="compositionally biased region" description="Low complexity" evidence="5">
    <location>
        <begin position="416"/>
        <end position="434"/>
    </location>
</feature>
<feature type="compositionally biased region" description="Basic and acidic residues" evidence="5">
    <location>
        <begin position="435"/>
        <end position="453"/>
    </location>
</feature>
<feature type="compositionally biased region" description="Polar residues" evidence="5">
    <location>
        <begin position="489"/>
        <end position="505"/>
    </location>
</feature>
<feature type="modified residue" description="Phosphoserine" evidence="3">
    <location>
        <position position="173"/>
    </location>
</feature>
<feature type="modified residue" description="Phosphoserine" evidence="2">
    <location>
        <position position="467"/>
    </location>
</feature>
<feature type="modified residue" description="Phosphothreonine" evidence="2">
    <location>
        <position position="499"/>
    </location>
</feature>
<gene>
    <name type="primary">KLC3</name>
</gene>
<accession>Q2TBQ9</accession>
<name>KLC3_BOVIN</name>
<sequence>MSVQVAAPGGLGLGLERPSPEELVRQTRQVVKGLEALRAEHRGLAGHLAEALAAQGPAAGLELLEEKQQVVSHSLEAIELGLGEAQVLLALSAHVGALEAEKQRLRAQARRLAQENAWLREELEETQRRLRASEEAVAQLEEEKSHLEFLGQLRQYDPPAESQQPESPPRRDSLASLFPSEEEERRGPEAVGAAAAQQGGYEIPARLRTLHNLVIQYAGQGRYEVAVPLCRQALEDLERSSGHCHPDVATMLNILALVYRDQNKYKEATDLLHDALQIREQTLGPEHPAVAATLNNLAVLYGKRGRYREAEPLCQRALEIREKVLGADHPDVAKQLNNLALLCQNQGKFEEVERHYARALSIYEALGGPHDPNVAKTKNNLASAYLKQNKYQQAEELYKEILHREALPAPLGAPNTGTTSDTQQQTLSRSSSFSKLRESIRRGSEKLVSRLRGEGAAGAAGMKRAMSLSMLNTDGSRAPENQFPRQHLSEASRTLSTSTQDLGPR</sequence>
<dbReference type="EMBL" id="BC109786">
    <property type="protein sequence ID" value="AAI09787.1"/>
    <property type="molecule type" value="mRNA"/>
</dbReference>
<dbReference type="RefSeq" id="NP_001033638.1">
    <property type="nucleotide sequence ID" value="NM_001038549.1"/>
</dbReference>
<dbReference type="SMR" id="Q2TBQ9"/>
<dbReference type="FunCoup" id="Q2TBQ9">
    <property type="interactions" value="37"/>
</dbReference>
<dbReference type="STRING" id="9913.ENSBTAP00000072275"/>
<dbReference type="PaxDb" id="9913-ENSBTAP00000041235"/>
<dbReference type="GeneID" id="517633"/>
<dbReference type="KEGG" id="bta:517633"/>
<dbReference type="CTD" id="147700"/>
<dbReference type="eggNOG" id="KOG1840">
    <property type="taxonomic scope" value="Eukaryota"/>
</dbReference>
<dbReference type="InParanoid" id="Q2TBQ9"/>
<dbReference type="OrthoDB" id="413723at2759"/>
<dbReference type="Proteomes" id="UP000009136">
    <property type="component" value="Unplaced"/>
</dbReference>
<dbReference type="GO" id="GO:0005737">
    <property type="term" value="C:cytoplasm"/>
    <property type="evidence" value="ECO:0000318"/>
    <property type="project" value="GO_Central"/>
</dbReference>
<dbReference type="GO" id="GO:0005871">
    <property type="term" value="C:kinesin complex"/>
    <property type="evidence" value="ECO:0007669"/>
    <property type="project" value="InterPro"/>
</dbReference>
<dbReference type="GO" id="GO:0005874">
    <property type="term" value="C:microtubule"/>
    <property type="evidence" value="ECO:0007669"/>
    <property type="project" value="UniProtKB-KW"/>
</dbReference>
<dbReference type="GO" id="GO:0005739">
    <property type="term" value="C:mitochondrion"/>
    <property type="evidence" value="ECO:0000250"/>
    <property type="project" value="UniProtKB"/>
</dbReference>
<dbReference type="GO" id="GO:0019894">
    <property type="term" value="F:kinesin binding"/>
    <property type="evidence" value="ECO:0000318"/>
    <property type="project" value="GO_Central"/>
</dbReference>
<dbReference type="GO" id="GO:0007018">
    <property type="term" value="P:microtubule-based movement"/>
    <property type="evidence" value="ECO:0000318"/>
    <property type="project" value="GO_Central"/>
</dbReference>
<dbReference type="GO" id="GO:0120317">
    <property type="term" value="P:sperm mitochondrial sheath assembly"/>
    <property type="evidence" value="ECO:0000250"/>
    <property type="project" value="UniProtKB"/>
</dbReference>
<dbReference type="GO" id="GO:0007286">
    <property type="term" value="P:spermatid development"/>
    <property type="evidence" value="ECO:0000250"/>
    <property type="project" value="UniProtKB"/>
</dbReference>
<dbReference type="GO" id="GO:0007283">
    <property type="term" value="P:spermatogenesis"/>
    <property type="evidence" value="ECO:0000250"/>
    <property type="project" value="UniProtKB"/>
</dbReference>
<dbReference type="FunFam" id="1.25.40.10:FF:000003">
    <property type="entry name" value="kinesin light chain isoform X1"/>
    <property type="match status" value="1"/>
</dbReference>
<dbReference type="Gene3D" id="1.25.40.10">
    <property type="entry name" value="Tetratricopeptide repeat domain"/>
    <property type="match status" value="1"/>
</dbReference>
<dbReference type="InterPro" id="IPR002151">
    <property type="entry name" value="Kinesin_light"/>
</dbReference>
<dbReference type="InterPro" id="IPR011990">
    <property type="entry name" value="TPR-like_helical_dom_sf"/>
</dbReference>
<dbReference type="InterPro" id="IPR019734">
    <property type="entry name" value="TPR_rpt"/>
</dbReference>
<dbReference type="PANTHER" id="PTHR45783">
    <property type="entry name" value="KINESIN LIGHT CHAIN"/>
    <property type="match status" value="1"/>
</dbReference>
<dbReference type="PANTHER" id="PTHR45783:SF1">
    <property type="entry name" value="KINESIN LIGHT CHAIN 3"/>
    <property type="match status" value="1"/>
</dbReference>
<dbReference type="Pfam" id="PF13374">
    <property type="entry name" value="TPR_10"/>
    <property type="match status" value="1"/>
</dbReference>
<dbReference type="Pfam" id="PF13424">
    <property type="entry name" value="TPR_12"/>
    <property type="match status" value="2"/>
</dbReference>
<dbReference type="PRINTS" id="PR00381">
    <property type="entry name" value="KINESINLIGHT"/>
</dbReference>
<dbReference type="SMART" id="SM00028">
    <property type="entry name" value="TPR"/>
    <property type="match status" value="4"/>
</dbReference>
<dbReference type="SUPFAM" id="SSF48452">
    <property type="entry name" value="TPR-like"/>
    <property type="match status" value="1"/>
</dbReference>
<dbReference type="PROSITE" id="PS50005">
    <property type="entry name" value="TPR"/>
    <property type="match status" value="4"/>
</dbReference>
<dbReference type="PROSITE" id="PS50293">
    <property type="entry name" value="TPR_REGION"/>
    <property type="match status" value="1"/>
</dbReference>
<proteinExistence type="evidence at transcript level"/>
<protein>
    <recommendedName>
        <fullName>Kinesin light chain 3</fullName>
    </recommendedName>
</protein>
<keyword id="KW-0175">Coiled coil</keyword>
<keyword id="KW-0963">Cytoplasm</keyword>
<keyword id="KW-0206">Cytoskeleton</keyword>
<keyword id="KW-0221">Differentiation</keyword>
<keyword id="KW-0493">Microtubule</keyword>
<keyword id="KW-0496">Mitochondrion</keyword>
<keyword id="KW-0505">Motor protein</keyword>
<keyword id="KW-0597">Phosphoprotein</keyword>
<keyword id="KW-1185">Reference proteome</keyword>
<keyword id="KW-0677">Repeat</keyword>
<keyword id="KW-0744">Spermatogenesis</keyword>
<keyword id="KW-0802">TPR repeat</keyword>
<evidence type="ECO:0000250" key="1">
    <source>
        <dbReference type="UniProtKB" id="Q68G30"/>
    </source>
</evidence>
<evidence type="ECO:0000250" key="2">
    <source>
        <dbReference type="UniProtKB" id="Q6P597"/>
    </source>
</evidence>
<evidence type="ECO:0000250" key="3">
    <source>
        <dbReference type="UniProtKB" id="Q91W40"/>
    </source>
</evidence>
<evidence type="ECO:0000255" key="4"/>
<evidence type="ECO:0000256" key="5">
    <source>
        <dbReference type="SAM" id="MobiDB-lite"/>
    </source>
</evidence>
<evidence type="ECO:0000305" key="6"/>
<comment type="function">
    <text evidence="3">Kinesin is a microtubule-associated force-producing protein that may play a role in organelle transport. Plays a role during spermiogenesis in the development of the sperm tail midpiece and in the normal function of spermatozoa (By similarity). May play a role in the formation of the mitochondrial sheath formation in the developing spermatid midpiece (By similarity).</text>
</comment>
<comment type="subunit">
    <text evidence="1 3">Oligomer composed of two heavy chains and two light chains. Associates with microtubulin in an ATP-dependent manner. Interacts with KIF5C. Interacts with ODF1. Interacts with LRGUK (By similarity). Interacts with VDAC2 (By similarity).</text>
</comment>
<comment type="subcellular location">
    <subcellularLocation>
        <location evidence="1 3">Cytoplasm</location>
        <location evidence="1 3">Cytoskeleton</location>
    </subcellularLocation>
    <subcellularLocation>
        <location evidence="3">Mitochondrion</location>
    </subcellularLocation>
    <text evidence="1 3">In elongating spermatid tail midpiece, localized in outer dense fibers (ODFs) and associates with mitochondria. Also localizes to the manchette in elongating spermatids.</text>
</comment>
<comment type="domain">
    <text evidence="1">The heptad repeat (HR) motif is sufficient for interaction with kinesin heavy (KHL) chains and ODF1. The TPR region is involved in mitochondrial binding (By similarity).</text>
</comment>
<comment type="similarity">
    <text evidence="6">Belongs to the kinesin light chain family.</text>
</comment>
<organism>
    <name type="scientific">Bos taurus</name>
    <name type="common">Bovine</name>
    <dbReference type="NCBI Taxonomy" id="9913"/>
    <lineage>
        <taxon>Eukaryota</taxon>
        <taxon>Metazoa</taxon>
        <taxon>Chordata</taxon>
        <taxon>Craniata</taxon>
        <taxon>Vertebrata</taxon>
        <taxon>Euteleostomi</taxon>
        <taxon>Mammalia</taxon>
        <taxon>Eutheria</taxon>
        <taxon>Laurasiatheria</taxon>
        <taxon>Artiodactyla</taxon>
        <taxon>Ruminantia</taxon>
        <taxon>Pecora</taxon>
        <taxon>Bovidae</taxon>
        <taxon>Bovinae</taxon>
        <taxon>Bos</taxon>
    </lineage>
</organism>
<reference key="1">
    <citation type="submission" date="2005-11" db="EMBL/GenBank/DDBJ databases">
        <authorList>
            <consortium name="NIH - Mammalian Gene Collection (MGC) project"/>
        </authorList>
    </citation>
    <scope>NUCLEOTIDE SEQUENCE [LARGE SCALE MRNA]</scope>
    <source>
        <strain>Crossbred X Angus</strain>
        <tissue>Liver</tissue>
    </source>
</reference>